<sequence>MAEAMVVEDRPAEAKRFFCHMCNVEINIPNSDFTCPLCANGFVEELPANAPEMDSSTAGASGSARSGSSGSGSSGSHDTLSRGSSSSGSQVNVESLRNDIVSLLNMRNVPNLEITIEPNRRHSNVLHLGGFGGPSGSDSARGLTAGGRVRPANLDRLDNVLFDFLQSLPLAGATAEIVTGPGGGGVGGGGNSHMFFMGNPGDYAWGREGLDTIVTQMLNQMETSGPPPLSAQRINEIPNVQINAEEVNRKIQCSICWDDFKIDETVRKLPCSHLYHENCIVPWLNLHSTCPICRKSLADDGNDADDEFVMLDAFGPEMAADGSNSERRSASTATGTDNPSPANNPSQAAAEGGRTRPDANPAQAARNNIFTFDDDNMFLD</sequence>
<gene>
    <name evidence="4 7" type="primary">Iru</name>
    <name evidence="7" type="ORF">CG11982</name>
</gene>
<protein>
    <recommendedName>
        <fullName evidence="4 7">E3 ubiquitin-protein ligase Iruka</fullName>
        <ecNumber evidence="3">2.3.2.27</ecNumber>
    </recommendedName>
</protein>
<evidence type="ECO:0000255" key="1">
    <source>
        <dbReference type="PROSITE-ProRule" id="PRU00175"/>
    </source>
</evidence>
<evidence type="ECO:0000256" key="2">
    <source>
        <dbReference type="SAM" id="MobiDB-lite"/>
    </source>
</evidence>
<evidence type="ECO:0000269" key="3">
    <source>
    </source>
</evidence>
<evidence type="ECO:0000303" key="4">
    <source>
    </source>
</evidence>
<evidence type="ECO:0000305" key="5"/>
<evidence type="ECO:0000305" key="6">
    <source>
    </source>
</evidence>
<evidence type="ECO:0000312" key="7">
    <source>
        <dbReference type="FlyBase" id="FBgn0037653"/>
    </source>
</evidence>
<evidence type="ECO:0000312" key="8">
    <source>
        <dbReference type="Proteomes" id="UP000000803"/>
    </source>
</evidence>
<organism evidence="8">
    <name type="scientific">Drosophila melanogaster</name>
    <name type="common">Fruit fly</name>
    <dbReference type="NCBI Taxonomy" id="7227"/>
    <lineage>
        <taxon>Eukaryota</taxon>
        <taxon>Metazoa</taxon>
        <taxon>Ecdysozoa</taxon>
        <taxon>Arthropoda</taxon>
        <taxon>Hexapoda</taxon>
        <taxon>Insecta</taxon>
        <taxon>Pterygota</taxon>
        <taxon>Neoptera</taxon>
        <taxon>Endopterygota</taxon>
        <taxon>Diptera</taxon>
        <taxon>Brachycera</taxon>
        <taxon>Muscomorpha</taxon>
        <taxon>Ephydroidea</taxon>
        <taxon>Drosophilidae</taxon>
        <taxon>Drosophila</taxon>
        <taxon>Sophophora</taxon>
    </lineage>
</organism>
<name>IRU_DROME</name>
<feature type="chain" id="PRO_0000447647" description="E3 ubiquitin-protein ligase Iruka">
    <location>
        <begin position="1"/>
        <end position="380"/>
    </location>
</feature>
<feature type="zinc finger region" description="RING-type; atypical" evidence="1">
    <location>
        <begin position="253"/>
        <end position="294"/>
    </location>
</feature>
<feature type="region of interest" description="Disordered" evidence="2">
    <location>
        <begin position="50"/>
        <end position="92"/>
    </location>
</feature>
<feature type="region of interest" description="Disordered" evidence="2">
    <location>
        <begin position="317"/>
        <end position="367"/>
    </location>
</feature>
<feature type="compositionally biased region" description="Low complexity" evidence="2">
    <location>
        <begin position="55"/>
        <end position="68"/>
    </location>
</feature>
<feature type="compositionally biased region" description="Low complexity" evidence="2">
    <location>
        <begin position="74"/>
        <end position="89"/>
    </location>
</feature>
<feature type="compositionally biased region" description="Low complexity" evidence="2">
    <location>
        <begin position="338"/>
        <end position="350"/>
    </location>
</feature>
<feature type="mutagenesis site" description="Loss of interaction with CG7546. Retains ubiquitin-protein ligase activity." evidence="3">
    <location>
        <begin position="15"/>
        <end position="47"/>
    </location>
</feature>
<feature type="mutagenesis site" description="Loss of ubiquitination activity; when associated with A-256." evidence="3">
    <original>C</original>
    <variation>A</variation>
    <location>
        <position position="253"/>
    </location>
</feature>
<feature type="mutagenesis site" description="Loss of ubiquitination activity; when associated with A-253." evidence="3">
    <original>C</original>
    <variation>A</variation>
    <location>
        <position position="256"/>
    </location>
</feature>
<accession>Q9VHI7</accession>
<keyword id="KW-0479">Metal-binding</keyword>
<keyword id="KW-1185">Reference proteome</keyword>
<keyword id="KW-0808">Transferase</keyword>
<keyword id="KW-0833">Ubl conjugation pathway</keyword>
<keyword id="KW-0862">Zinc</keyword>
<keyword id="KW-0863">Zinc-finger</keyword>
<dbReference type="EC" id="2.3.2.27" evidence="3"/>
<dbReference type="EMBL" id="AE014297">
    <property type="protein sequence ID" value="AAF54321.1"/>
    <property type="molecule type" value="Genomic_DNA"/>
</dbReference>
<dbReference type="EMBL" id="AY052007">
    <property type="protein sequence ID" value="AAK93431.1"/>
    <property type="molecule type" value="mRNA"/>
</dbReference>
<dbReference type="RefSeq" id="NP_649859.1">
    <property type="nucleotide sequence ID" value="NM_141602.4"/>
</dbReference>
<dbReference type="SMR" id="Q9VHI7"/>
<dbReference type="FunCoup" id="Q9VHI7">
    <property type="interactions" value="140"/>
</dbReference>
<dbReference type="IntAct" id="Q9VHI7">
    <property type="interactions" value="6"/>
</dbReference>
<dbReference type="STRING" id="7227.FBpp0081445"/>
<dbReference type="PaxDb" id="7227-FBpp0081445"/>
<dbReference type="DNASU" id="41080"/>
<dbReference type="EnsemblMetazoa" id="FBtr0081965">
    <property type="protein sequence ID" value="FBpp0081445"/>
    <property type="gene ID" value="FBgn0037653"/>
</dbReference>
<dbReference type="GeneID" id="41080"/>
<dbReference type="KEGG" id="dme:Dmel_CG11982"/>
<dbReference type="UCSC" id="CG11982-RA">
    <property type="organism name" value="d. melanogaster"/>
</dbReference>
<dbReference type="AGR" id="FB:FBgn0037653"/>
<dbReference type="CTD" id="41080"/>
<dbReference type="FlyBase" id="FBgn0037653">
    <property type="gene designation" value="Iru"/>
</dbReference>
<dbReference type="VEuPathDB" id="VectorBase:FBgn0037653"/>
<dbReference type="eggNOG" id="KOG0800">
    <property type="taxonomic scope" value="Eukaryota"/>
</dbReference>
<dbReference type="GeneTree" id="ENSGT00940000168353"/>
<dbReference type="HOGENOM" id="CLU_034892_0_1_1"/>
<dbReference type="InParanoid" id="Q9VHI7"/>
<dbReference type="OMA" id="PNSDFTC"/>
<dbReference type="OrthoDB" id="8062037at2759"/>
<dbReference type="PhylomeDB" id="Q9VHI7"/>
<dbReference type="Reactome" id="R-DME-983168">
    <property type="pathway name" value="Antigen processing: Ubiquitination &amp; Proteasome degradation"/>
</dbReference>
<dbReference type="UniPathway" id="UPA00143"/>
<dbReference type="BioGRID-ORCS" id="41080">
    <property type="hits" value="0 hits in 3 CRISPR screens"/>
</dbReference>
<dbReference type="GenomeRNAi" id="41080"/>
<dbReference type="PRO" id="PR:Q9VHI7"/>
<dbReference type="Proteomes" id="UP000000803">
    <property type="component" value="Chromosome 3R"/>
</dbReference>
<dbReference type="Bgee" id="FBgn0037653">
    <property type="expression patterns" value="Expressed in fat body cell in testis and 113 other cell types or tissues"/>
</dbReference>
<dbReference type="GO" id="GO:0005737">
    <property type="term" value="C:cytoplasm"/>
    <property type="evidence" value="ECO:0000318"/>
    <property type="project" value="GO_Central"/>
</dbReference>
<dbReference type="GO" id="GO:0061630">
    <property type="term" value="F:ubiquitin protein ligase activity"/>
    <property type="evidence" value="ECO:0000315"/>
    <property type="project" value="UniProtKB"/>
</dbReference>
<dbReference type="GO" id="GO:0004842">
    <property type="term" value="F:ubiquitin-protein transferase activity"/>
    <property type="evidence" value="ECO:0000250"/>
    <property type="project" value="FlyBase"/>
</dbReference>
<dbReference type="GO" id="GO:0008270">
    <property type="term" value="F:zinc ion binding"/>
    <property type="evidence" value="ECO:0000255"/>
    <property type="project" value="FlyBase"/>
</dbReference>
<dbReference type="GO" id="GO:0051865">
    <property type="term" value="P:protein autoubiquitination"/>
    <property type="evidence" value="ECO:0000250"/>
    <property type="project" value="FlyBase"/>
</dbReference>
<dbReference type="GO" id="GO:0000209">
    <property type="term" value="P:protein polyubiquitination"/>
    <property type="evidence" value="ECO:0000315"/>
    <property type="project" value="UniProtKB"/>
</dbReference>
<dbReference type="GO" id="GO:0016567">
    <property type="term" value="P:protein ubiquitination"/>
    <property type="evidence" value="ECO:0000318"/>
    <property type="project" value="GO_Central"/>
</dbReference>
<dbReference type="CDD" id="cd16667">
    <property type="entry name" value="RING-H2_RNF126-like"/>
    <property type="match status" value="1"/>
</dbReference>
<dbReference type="FunFam" id="3.30.40.10:FF:000069">
    <property type="entry name" value="E3 ubiquitin-protein ligase RNF115"/>
    <property type="match status" value="1"/>
</dbReference>
<dbReference type="Gene3D" id="3.30.40.10">
    <property type="entry name" value="Zinc/RING finger domain, C3HC4 (zinc finger)"/>
    <property type="match status" value="1"/>
</dbReference>
<dbReference type="InterPro" id="IPR051834">
    <property type="entry name" value="RING_finger_E3_ligase"/>
</dbReference>
<dbReference type="InterPro" id="IPR039525">
    <property type="entry name" value="RNF126-like_zinc-ribbon"/>
</dbReference>
<dbReference type="InterPro" id="IPR001841">
    <property type="entry name" value="Znf_RING"/>
</dbReference>
<dbReference type="InterPro" id="IPR013083">
    <property type="entry name" value="Znf_RING/FYVE/PHD"/>
</dbReference>
<dbReference type="PANTHER" id="PTHR45931:SF3">
    <property type="entry name" value="RING ZINC FINGER-CONTAINING PROTEIN"/>
    <property type="match status" value="1"/>
</dbReference>
<dbReference type="PANTHER" id="PTHR45931">
    <property type="entry name" value="SI:CH211-59O9.10"/>
    <property type="match status" value="1"/>
</dbReference>
<dbReference type="Pfam" id="PF13639">
    <property type="entry name" value="zf-RING_2"/>
    <property type="match status" value="1"/>
</dbReference>
<dbReference type="Pfam" id="PF14369">
    <property type="entry name" value="Zn_ribbon_19"/>
    <property type="match status" value="1"/>
</dbReference>
<dbReference type="SMART" id="SM00184">
    <property type="entry name" value="RING"/>
    <property type="match status" value="1"/>
</dbReference>
<dbReference type="SUPFAM" id="SSF57850">
    <property type="entry name" value="RING/U-box"/>
    <property type="match status" value="1"/>
</dbReference>
<dbReference type="PROSITE" id="PS50089">
    <property type="entry name" value="ZF_RING_2"/>
    <property type="match status" value="1"/>
</dbReference>
<reference evidence="8" key="1">
    <citation type="journal article" date="2000" name="Science">
        <title>The genome sequence of Drosophila melanogaster.</title>
        <authorList>
            <person name="Adams M.D."/>
            <person name="Celniker S.E."/>
            <person name="Holt R.A."/>
            <person name="Evans C.A."/>
            <person name="Gocayne J.D."/>
            <person name="Amanatides P.G."/>
            <person name="Scherer S.E."/>
            <person name="Li P.W."/>
            <person name="Hoskins R.A."/>
            <person name="Galle R.F."/>
            <person name="George R.A."/>
            <person name="Lewis S.E."/>
            <person name="Richards S."/>
            <person name="Ashburner M."/>
            <person name="Henderson S.N."/>
            <person name="Sutton G.G."/>
            <person name="Wortman J.R."/>
            <person name="Yandell M.D."/>
            <person name="Zhang Q."/>
            <person name="Chen L.X."/>
            <person name="Brandon R.C."/>
            <person name="Rogers Y.-H.C."/>
            <person name="Blazej R.G."/>
            <person name="Champe M."/>
            <person name="Pfeiffer B.D."/>
            <person name="Wan K.H."/>
            <person name="Doyle C."/>
            <person name="Baxter E.G."/>
            <person name="Helt G."/>
            <person name="Nelson C.R."/>
            <person name="Miklos G.L.G."/>
            <person name="Abril J.F."/>
            <person name="Agbayani A."/>
            <person name="An H.-J."/>
            <person name="Andrews-Pfannkoch C."/>
            <person name="Baldwin D."/>
            <person name="Ballew R.M."/>
            <person name="Basu A."/>
            <person name="Baxendale J."/>
            <person name="Bayraktaroglu L."/>
            <person name="Beasley E.M."/>
            <person name="Beeson K.Y."/>
            <person name="Benos P.V."/>
            <person name="Berman B.P."/>
            <person name="Bhandari D."/>
            <person name="Bolshakov S."/>
            <person name="Borkova D."/>
            <person name="Botchan M.R."/>
            <person name="Bouck J."/>
            <person name="Brokstein P."/>
            <person name="Brottier P."/>
            <person name="Burtis K.C."/>
            <person name="Busam D.A."/>
            <person name="Butler H."/>
            <person name="Cadieu E."/>
            <person name="Center A."/>
            <person name="Chandra I."/>
            <person name="Cherry J.M."/>
            <person name="Cawley S."/>
            <person name="Dahlke C."/>
            <person name="Davenport L.B."/>
            <person name="Davies P."/>
            <person name="de Pablos B."/>
            <person name="Delcher A."/>
            <person name="Deng Z."/>
            <person name="Mays A.D."/>
            <person name="Dew I."/>
            <person name="Dietz S.M."/>
            <person name="Dodson K."/>
            <person name="Doup L.E."/>
            <person name="Downes M."/>
            <person name="Dugan-Rocha S."/>
            <person name="Dunkov B.C."/>
            <person name="Dunn P."/>
            <person name="Durbin K.J."/>
            <person name="Evangelista C.C."/>
            <person name="Ferraz C."/>
            <person name="Ferriera S."/>
            <person name="Fleischmann W."/>
            <person name="Fosler C."/>
            <person name="Gabrielian A.E."/>
            <person name="Garg N.S."/>
            <person name="Gelbart W.M."/>
            <person name="Glasser K."/>
            <person name="Glodek A."/>
            <person name="Gong F."/>
            <person name="Gorrell J.H."/>
            <person name="Gu Z."/>
            <person name="Guan P."/>
            <person name="Harris M."/>
            <person name="Harris N.L."/>
            <person name="Harvey D.A."/>
            <person name="Heiman T.J."/>
            <person name="Hernandez J.R."/>
            <person name="Houck J."/>
            <person name="Hostin D."/>
            <person name="Houston K.A."/>
            <person name="Howland T.J."/>
            <person name="Wei M.-H."/>
            <person name="Ibegwam C."/>
            <person name="Jalali M."/>
            <person name="Kalush F."/>
            <person name="Karpen G.H."/>
            <person name="Ke Z."/>
            <person name="Kennison J.A."/>
            <person name="Ketchum K.A."/>
            <person name="Kimmel B.E."/>
            <person name="Kodira C.D."/>
            <person name="Kraft C.L."/>
            <person name="Kravitz S."/>
            <person name="Kulp D."/>
            <person name="Lai Z."/>
            <person name="Lasko P."/>
            <person name="Lei Y."/>
            <person name="Levitsky A.A."/>
            <person name="Li J.H."/>
            <person name="Li Z."/>
            <person name="Liang Y."/>
            <person name="Lin X."/>
            <person name="Liu X."/>
            <person name="Mattei B."/>
            <person name="McIntosh T.C."/>
            <person name="McLeod M.P."/>
            <person name="McPherson D."/>
            <person name="Merkulov G."/>
            <person name="Milshina N.V."/>
            <person name="Mobarry C."/>
            <person name="Morris J."/>
            <person name="Moshrefi A."/>
            <person name="Mount S.M."/>
            <person name="Moy M."/>
            <person name="Murphy B."/>
            <person name="Murphy L."/>
            <person name="Muzny D.M."/>
            <person name="Nelson D.L."/>
            <person name="Nelson D.R."/>
            <person name="Nelson K.A."/>
            <person name="Nixon K."/>
            <person name="Nusskern D.R."/>
            <person name="Pacleb J.M."/>
            <person name="Palazzolo M."/>
            <person name="Pittman G.S."/>
            <person name="Pan S."/>
            <person name="Pollard J."/>
            <person name="Puri V."/>
            <person name="Reese M.G."/>
            <person name="Reinert K."/>
            <person name="Remington K."/>
            <person name="Saunders R.D.C."/>
            <person name="Scheeler F."/>
            <person name="Shen H."/>
            <person name="Shue B.C."/>
            <person name="Siden-Kiamos I."/>
            <person name="Simpson M."/>
            <person name="Skupski M.P."/>
            <person name="Smith T.J."/>
            <person name="Spier E."/>
            <person name="Spradling A.C."/>
            <person name="Stapleton M."/>
            <person name="Strong R."/>
            <person name="Sun E."/>
            <person name="Svirskas R."/>
            <person name="Tector C."/>
            <person name="Turner R."/>
            <person name="Venter E."/>
            <person name="Wang A.H."/>
            <person name="Wang X."/>
            <person name="Wang Z.-Y."/>
            <person name="Wassarman D.A."/>
            <person name="Weinstock G.M."/>
            <person name="Weissenbach J."/>
            <person name="Williams S.M."/>
            <person name="Woodage T."/>
            <person name="Worley K.C."/>
            <person name="Wu D."/>
            <person name="Yang S."/>
            <person name="Yao Q.A."/>
            <person name="Ye J."/>
            <person name="Yeh R.-F."/>
            <person name="Zaveri J.S."/>
            <person name="Zhan M."/>
            <person name="Zhang G."/>
            <person name="Zhao Q."/>
            <person name="Zheng L."/>
            <person name="Zheng X.H."/>
            <person name="Zhong F.N."/>
            <person name="Zhong W."/>
            <person name="Zhou X."/>
            <person name="Zhu S.C."/>
            <person name="Zhu X."/>
            <person name="Smith H.O."/>
            <person name="Gibbs R.A."/>
            <person name="Myers E.W."/>
            <person name="Rubin G.M."/>
            <person name="Venter J.C."/>
        </authorList>
    </citation>
    <scope>NUCLEOTIDE SEQUENCE [LARGE SCALE GENOMIC DNA]</scope>
    <source>
        <strain evidence="8">Berkeley</strain>
    </source>
</reference>
<reference evidence="8" key="2">
    <citation type="journal article" date="2002" name="Genome Biol.">
        <title>Annotation of the Drosophila melanogaster euchromatic genome: a systematic review.</title>
        <authorList>
            <person name="Misra S."/>
            <person name="Crosby M.A."/>
            <person name="Mungall C.J."/>
            <person name="Matthews B.B."/>
            <person name="Campbell K.S."/>
            <person name="Hradecky P."/>
            <person name="Huang Y."/>
            <person name="Kaminker J.S."/>
            <person name="Millburn G.H."/>
            <person name="Prochnik S.E."/>
            <person name="Smith C.D."/>
            <person name="Tupy J.L."/>
            <person name="Whitfield E.J."/>
            <person name="Bayraktaroglu L."/>
            <person name="Berman B.P."/>
            <person name="Bettencourt B.R."/>
            <person name="Celniker S.E."/>
            <person name="de Grey A.D.N.J."/>
            <person name="Drysdale R.A."/>
            <person name="Harris N.L."/>
            <person name="Richter J."/>
            <person name="Russo S."/>
            <person name="Schroeder A.J."/>
            <person name="Shu S.Q."/>
            <person name="Stapleton M."/>
            <person name="Yamada C."/>
            <person name="Ashburner M."/>
            <person name="Gelbart W.M."/>
            <person name="Rubin G.M."/>
            <person name="Lewis S.E."/>
        </authorList>
    </citation>
    <scope>GENOME REANNOTATION</scope>
    <source>
        <strain evidence="8">Berkeley</strain>
    </source>
</reference>
<reference evidence="7" key="3">
    <citation type="journal article" date="2002" name="Genome Biol.">
        <title>A Drosophila full-length cDNA resource.</title>
        <authorList>
            <person name="Stapleton M."/>
            <person name="Carlson J.W."/>
            <person name="Brokstein P."/>
            <person name="Yu C."/>
            <person name="Champe M."/>
            <person name="George R.A."/>
            <person name="Guarin H."/>
            <person name="Kronmiller B."/>
            <person name="Pacleb J.M."/>
            <person name="Park S."/>
            <person name="Wan K.H."/>
            <person name="Rubin G.M."/>
            <person name="Celniker S.E."/>
        </authorList>
    </citation>
    <scope>NUCLEOTIDE SEQUENCE [LARGE SCALE MRNA]</scope>
    <source>
        <strain evidence="7">Berkeley</strain>
        <tissue evidence="7">Embryo</tissue>
    </source>
</reference>
<reference evidence="5" key="4">
    <citation type="journal article" date="2019" name="Mol. Cell">
        <title>Iruka Eliminates Dysfunctional Argonaute by Selective Ubiquitination of Its Empty State.</title>
        <authorList>
            <person name="Kobayashi H."/>
            <person name="Shoji K."/>
            <person name="Kiyokawa K."/>
            <person name="Negishi L."/>
            <person name="Tomari Y."/>
        </authorList>
    </citation>
    <scope>IDENTIFICATION BY MASS SPECTROMETRY</scope>
    <scope>FUNCTION</scope>
    <scope>INTERACTION WITH CG7546</scope>
    <scope>MUTAGENESIS OF 15-LYS--PRO-47; CYS-253 AND CYS-256</scope>
</reference>
<proteinExistence type="evidence at protein level"/>
<comment type="function">
    <text evidence="3">E3 ubiquitin-protein ligase that mediates E2-dependent, 'Lys-48'- and/or 'Lys-63'-linked polyubiquitination of substrates (PubMed:30503771). Recognizes miRNA-empty Ago1 and triggers its degradation via polyubiquitination independently of the Bag6 complex (PubMed:30503771). By targeting miRNA-empty Ago1, eliminates dysfunctional Ago1 not able to bind miRNA and thereby plays a role in the quality control of miRNA-mediated silencing (PubMed:30503771).</text>
</comment>
<comment type="catalytic activity">
    <reaction evidence="3">
        <text>S-ubiquitinyl-[E2 ubiquitin-conjugating enzyme]-L-cysteine + [acceptor protein]-L-lysine = [E2 ubiquitin-conjugating enzyme]-L-cysteine + N(6)-ubiquitinyl-[acceptor protein]-L-lysine.</text>
        <dbReference type="EC" id="2.3.2.27"/>
    </reaction>
</comment>
<comment type="pathway">
    <text evidence="3">Protein modification; protein ubiquitination.</text>
</comment>
<comment type="subunit">
    <text evidence="3">Interacts (via N-terminus) with CG7546 (via Ubl domain).</text>
</comment>
<comment type="interaction">
    <interactant intactId="EBI-153480">
        <id>Q9VHI7</id>
    </interactant>
    <interactant intactId="EBI-107908">
        <id>Q8T972</id>
        <label>BEST:GH28095</label>
    </interactant>
    <organismsDiffer>false</organismsDiffer>
    <experiments>4</experiments>
</comment>
<comment type="miscellaneous">
    <text evidence="6">'Iruka' means dolphin in Japanese. The name was chosen because dolphin preys on the Argonauta octopus, similar to Iruka 'preying' on the protein Argonaute.</text>
</comment>